<dbReference type="EC" id="3.6.5.-" evidence="1"/>
<dbReference type="EMBL" id="CP001393">
    <property type="protein sequence ID" value="ACM60222.1"/>
    <property type="molecule type" value="Genomic_DNA"/>
</dbReference>
<dbReference type="RefSeq" id="WP_015907624.1">
    <property type="nucleotide sequence ID" value="NC_012034.1"/>
</dbReference>
<dbReference type="SMR" id="B9MRB8"/>
<dbReference type="STRING" id="521460.Athe_1121"/>
<dbReference type="GeneID" id="31772471"/>
<dbReference type="KEGG" id="ate:Athe_1121"/>
<dbReference type="eggNOG" id="COG0536">
    <property type="taxonomic scope" value="Bacteria"/>
</dbReference>
<dbReference type="HOGENOM" id="CLU_011747_2_1_9"/>
<dbReference type="Proteomes" id="UP000007723">
    <property type="component" value="Chromosome"/>
</dbReference>
<dbReference type="GO" id="GO:0005737">
    <property type="term" value="C:cytoplasm"/>
    <property type="evidence" value="ECO:0007669"/>
    <property type="project" value="UniProtKB-SubCell"/>
</dbReference>
<dbReference type="GO" id="GO:0005525">
    <property type="term" value="F:GTP binding"/>
    <property type="evidence" value="ECO:0007669"/>
    <property type="project" value="UniProtKB-UniRule"/>
</dbReference>
<dbReference type="GO" id="GO:0003924">
    <property type="term" value="F:GTPase activity"/>
    <property type="evidence" value="ECO:0007669"/>
    <property type="project" value="UniProtKB-UniRule"/>
</dbReference>
<dbReference type="GO" id="GO:0000287">
    <property type="term" value="F:magnesium ion binding"/>
    <property type="evidence" value="ECO:0007669"/>
    <property type="project" value="InterPro"/>
</dbReference>
<dbReference type="GO" id="GO:0042254">
    <property type="term" value="P:ribosome biogenesis"/>
    <property type="evidence" value="ECO:0007669"/>
    <property type="project" value="UniProtKB-UniRule"/>
</dbReference>
<dbReference type="CDD" id="cd01898">
    <property type="entry name" value="Obg"/>
    <property type="match status" value="1"/>
</dbReference>
<dbReference type="FunFam" id="2.70.210.12:FF:000001">
    <property type="entry name" value="GTPase Obg"/>
    <property type="match status" value="1"/>
</dbReference>
<dbReference type="Gene3D" id="3.30.300.350">
    <property type="entry name" value="GTP-binding protein OBG, C-terminal domain"/>
    <property type="match status" value="1"/>
</dbReference>
<dbReference type="Gene3D" id="2.70.210.12">
    <property type="entry name" value="GTP1/OBG domain"/>
    <property type="match status" value="1"/>
</dbReference>
<dbReference type="Gene3D" id="3.40.50.300">
    <property type="entry name" value="P-loop containing nucleotide triphosphate hydrolases"/>
    <property type="match status" value="1"/>
</dbReference>
<dbReference type="HAMAP" id="MF_01454">
    <property type="entry name" value="GTPase_Obg"/>
    <property type="match status" value="1"/>
</dbReference>
<dbReference type="InterPro" id="IPR031167">
    <property type="entry name" value="G_OBG"/>
</dbReference>
<dbReference type="InterPro" id="IPR006073">
    <property type="entry name" value="GTP-bd"/>
</dbReference>
<dbReference type="InterPro" id="IPR014100">
    <property type="entry name" value="GTP-bd_Obg/CgtA"/>
</dbReference>
<dbReference type="InterPro" id="IPR036346">
    <property type="entry name" value="GTP-bd_prot_GTP1/OBG_C_sf"/>
</dbReference>
<dbReference type="InterPro" id="IPR006074">
    <property type="entry name" value="GTP1-OBG_CS"/>
</dbReference>
<dbReference type="InterPro" id="IPR006169">
    <property type="entry name" value="GTP1_OBG_dom"/>
</dbReference>
<dbReference type="InterPro" id="IPR036726">
    <property type="entry name" value="GTP1_OBG_dom_sf"/>
</dbReference>
<dbReference type="InterPro" id="IPR045086">
    <property type="entry name" value="OBG_GTPase"/>
</dbReference>
<dbReference type="InterPro" id="IPR015349">
    <property type="entry name" value="OCT_dom"/>
</dbReference>
<dbReference type="InterPro" id="IPR027417">
    <property type="entry name" value="P-loop_NTPase"/>
</dbReference>
<dbReference type="NCBIfam" id="TIGR02729">
    <property type="entry name" value="Obg_CgtA"/>
    <property type="match status" value="1"/>
</dbReference>
<dbReference type="NCBIfam" id="TIGR03595">
    <property type="entry name" value="Obg_CgtA_exten"/>
    <property type="match status" value="1"/>
</dbReference>
<dbReference type="NCBIfam" id="NF008954">
    <property type="entry name" value="PRK12296.1"/>
    <property type="match status" value="1"/>
</dbReference>
<dbReference type="NCBIfam" id="NF008955">
    <property type="entry name" value="PRK12297.1"/>
    <property type="match status" value="1"/>
</dbReference>
<dbReference type="NCBIfam" id="NF008956">
    <property type="entry name" value="PRK12299.1"/>
    <property type="match status" value="1"/>
</dbReference>
<dbReference type="PANTHER" id="PTHR11702">
    <property type="entry name" value="DEVELOPMENTALLY REGULATED GTP-BINDING PROTEIN-RELATED"/>
    <property type="match status" value="1"/>
</dbReference>
<dbReference type="PANTHER" id="PTHR11702:SF31">
    <property type="entry name" value="MITOCHONDRIAL RIBOSOME-ASSOCIATED GTPASE 2"/>
    <property type="match status" value="1"/>
</dbReference>
<dbReference type="Pfam" id="PF09269">
    <property type="entry name" value="DUF1967"/>
    <property type="match status" value="1"/>
</dbReference>
<dbReference type="Pfam" id="PF01018">
    <property type="entry name" value="GTP1_OBG"/>
    <property type="match status" value="1"/>
</dbReference>
<dbReference type="Pfam" id="PF01926">
    <property type="entry name" value="MMR_HSR1"/>
    <property type="match status" value="1"/>
</dbReference>
<dbReference type="PIRSF" id="PIRSF002401">
    <property type="entry name" value="GTP_bd_Obg/CgtA"/>
    <property type="match status" value="1"/>
</dbReference>
<dbReference type="PRINTS" id="PR00326">
    <property type="entry name" value="GTP1OBG"/>
</dbReference>
<dbReference type="SUPFAM" id="SSF102741">
    <property type="entry name" value="Obg GTP-binding protein C-terminal domain"/>
    <property type="match status" value="1"/>
</dbReference>
<dbReference type="SUPFAM" id="SSF82051">
    <property type="entry name" value="Obg GTP-binding protein N-terminal domain"/>
    <property type="match status" value="1"/>
</dbReference>
<dbReference type="SUPFAM" id="SSF52540">
    <property type="entry name" value="P-loop containing nucleoside triphosphate hydrolases"/>
    <property type="match status" value="1"/>
</dbReference>
<dbReference type="PROSITE" id="PS51710">
    <property type="entry name" value="G_OBG"/>
    <property type="match status" value="1"/>
</dbReference>
<dbReference type="PROSITE" id="PS00905">
    <property type="entry name" value="GTP1_OBG"/>
    <property type="match status" value="1"/>
</dbReference>
<dbReference type="PROSITE" id="PS51883">
    <property type="entry name" value="OBG"/>
    <property type="match status" value="1"/>
</dbReference>
<dbReference type="PROSITE" id="PS51881">
    <property type="entry name" value="OCT"/>
    <property type="match status" value="1"/>
</dbReference>
<organism>
    <name type="scientific">Caldicellulosiruptor bescii (strain ATCC BAA-1888 / DSM 6725 / KCTC 15123 / Z-1320)</name>
    <name type="common">Anaerocellum thermophilum</name>
    <dbReference type="NCBI Taxonomy" id="521460"/>
    <lineage>
        <taxon>Bacteria</taxon>
        <taxon>Bacillati</taxon>
        <taxon>Bacillota</taxon>
        <taxon>Bacillota incertae sedis</taxon>
        <taxon>Caldicellulosiruptorales</taxon>
        <taxon>Caldicellulosiruptoraceae</taxon>
        <taxon>Caldicellulosiruptor</taxon>
    </lineage>
</organism>
<comment type="function">
    <text evidence="1">An essential GTPase which binds GTP, GDP and possibly (p)ppGpp with moderate affinity, with high nucleotide exchange rates and a fairly low GTP hydrolysis rate. Plays a role in control of the cell cycle, stress response, ribosome biogenesis and in those bacteria that undergo differentiation, in morphogenesis control.</text>
</comment>
<comment type="cofactor">
    <cofactor evidence="1">
        <name>Mg(2+)</name>
        <dbReference type="ChEBI" id="CHEBI:18420"/>
    </cofactor>
</comment>
<comment type="subunit">
    <text evidence="1">Monomer.</text>
</comment>
<comment type="subcellular location">
    <subcellularLocation>
        <location evidence="1">Cytoplasm</location>
    </subcellularLocation>
</comment>
<comment type="similarity">
    <text evidence="1">Belongs to the TRAFAC class OBG-HflX-like GTPase superfamily. OBG GTPase family.</text>
</comment>
<keyword id="KW-0963">Cytoplasm</keyword>
<keyword id="KW-0342">GTP-binding</keyword>
<keyword id="KW-0378">Hydrolase</keyword>
<keyword id="KW-0460">Magnesium</keyword>
<keyword id="KW-0479">Metal-binding</keyword>
<keyword id="KW-0547">Nucleotide-binding</keyword>
<feature type="chain" id="PRO_0000385691" description="GTPase Obg">
    <location>
        <begin position="1"/>
        <end position="427"/>
    </location>
</feature>
<feature type="domain" description="Obg" evidence="3">
    <location>
        <begin position="1"/>
        <end position="158"/>
    </location>
</feature>
<feature type="domain" description="OBG-type G" evidence="1">
    <location>
        <begin position="159"/>
        <end position="330"/>
    </location>
</feature>
<feature type="domain" description="OCT" evidence="2">
    <location>
        <begin position="347"/>
        <end position="427"/>
    </location>
</feature>
<feature type="binding site" evidence="1">
    <location>
        <begin position="165"/>
        <end position="172"/>
    </location>
    <ligand>
        <name>GTP</name>
        <dbReference type="ChEBI" id="CHEBI:37565"/>
    </ligand>
</feature>
<feature type="binding site" evidence="1">
    <location>
        <position position="172"/>
    </location>
    <ligand>
        <name>Mg(2+)</name>
        <dbReference type="ChEBI" id="CHEBI:18420"/>
    </ligand>
</feature>
<feature type="binding site" evidence="1">
    <location>
        <begin position="190"/>
        <end position="194"/>
    </location>
    <ligand>
        <name>GTP</name>
        <dbReference type="ChEBI" id="CHEBI:37565"/>
    </ligand>
</feature>
<feature type="binding site" evidence="1">
    <location>
        <position position="192"/>
    </location>
    <ligand>
        <name>Mg(2+)</name>
        <dbReference type="ChEBI" id="CHEBI:18420"/>
    </ligand>
</feature>
<feature type="binding site" evidence="1">
    <location>
        <begin position="212"/>
        <end position="215"/>
    </location>
    <ligand>
        <name>GTP</name>
        <dbReference type="ChEBI" id="CHEBI:37565"/>
    </ligand>
</feature>
<feature type="binding site" evidence="1">
    <location>
        <begin position="282"/>
        <end position="285"/>
    </location>
    <ligand>
        <name>GTP</name>
        <dbReference type="ChEBI" id="CHEBI:37565"/>
    </ligand>
</feature>
<feature type="binding site" evidence="1">
    <location>
        <begin position="311"/>
        <end position="313"/>
    </location>
    <ligand>
        <name>GTP</name>
        <dbReference type="ChEBI" id="CHEBI:37565"/>
    </ligand>
</feature>
<accession>B9MRB8</accession>
<evidence type="ECO:0000255" key="1">
    <source>
        <dbReference type="HAMAP-Rule" id="MF_01454"/>
    </source>
</evidence>
<evidence type="ECO:0000255" key="2">
    <source>
        <dbReference type="PROSITE-ProRule" id="PRU01229"/>
    </source>
</evidence>
<evidence type="ECO:0000255" key="3">
    <source>
        <dbReference type="PROSITE-ProRule" id="PRU01231"/>
    </source>
</evidence>
<proteinExistence type="inferred from homology"/>
<protein>
    <recommendedName>
        <fullName evidence="1">GTPase Obg</fullName>
        <ecNumber evidence="1">3.6.5.-</ecNumber>
    </recommendedName>
    <alternativeName>
        <fullName evidence="1">GTP-binding protein Obg</fullName>
    </alternativeName>
</protein>
<gene>
    <name evidence="1" type="primary">obg</name>
    <name type="ordered locus">Athe_1121</name>
</gene>
<reference key="1">
    <citation type="submission" date="2009-01" db="EMBL/GenBank/DDBJ databases">
        <title>Complete sequence of chromosome of Caldicellulosiruptor becscii DSM 6725.</title>
        <authorList>
            <person name="Lucas S."/>
            <person name="Copeland A."/>
            <person name="Lapidus A."/>
            <person name="Glavina del Rio T."/>
            <person name="Tice H."/>
            <person name="Bruce D."/>
            <person name="Goodwin L."/>
            <person name="Pitluck S."/>
            <person name="Sims D."/>
            <person name="Meincke L."/>
            <person name="Brettin T."/>
            <person name="Detter J.C."/>
            <person name="Han C."/>
            <person name="Larimer F."/>
            <person name="Land M."/>
            <person name="Hauser L."/>
            <person name="Kyrpides N."/>
            <person name="Ovchinnikova G."/>
            <person name="Kataeva I."/>
            <person name="Adams M.W.W."/>
        </authorList>
    </citation>
    <scope>NUCLEOTIDE SEQUENCE [LARGE SCALE GENOMIC DNA]</scope>
    <source>
        <strain>ATCC BAA-1888 / DSM 6725 / KCTC 15123 / Z-1320</strain>
    </source>
</reference>
<sequence length="427" mass="47310">MFVDIAKIYVKAGDGGDGIVAFRREKYVPAGGPAGGDGGKGGDVIFVADRELNTLLDFKYKRHYKAQNGERGGPNNMHGKDGEDLIIKVPVGTVIKDAETGEIIADLSREGDRAIVAHGGRGGRGNSHFATSTRQVPRFAEVGEKGDELWVILELKVLADVGLIGYPNVGKSTFLSVATNARPEIANYPFTTKYPNLGIVYISEGESFVLADIPGLIEGASEGAGLGHQFLRHVERTKVLIHIVDVSGSEGREPVEDFIKINEELKKYSPELAQKPQIVAANKMDLPDAQAYFELFKEEIEKMGYEVYPVSAATGMGVREVLKRAYELLKQQKAAENVEEDAKPRTFVYYKKKDVKPLTIRKENGVYVVEGTVVEKVARNIVLNDHDSFRYFQNFLNKLGVFDKLREMGIQDGDIVRILDVEFEYYE</sequence>
<name>OBG_CALBD</name>